<keyword id="KW-0072">Autophagy</keyword>
<keyword id="KW-0175">Coiled coil</keyword>
<keyword id="KW-0967">Endosome</keyword>
<keyword id="KW-0472">Membrane</keyword>
<keyword id="KW-0653">Protein transport</keyword>
<keyword id="KW-1185">Reference proteome</keyword>
<keyword id="KW-0813">Transport</keyword>
<protein>
    <recommendedName>
        <fullName>Beclin-1-like protein B</fullName>
    </recommendedName>
    <alternativeName>
        <fullName>Autophagy-related protein 6B</fullName>
    </alternativeName>
</protein>
<feature type="chain" id="PRO_0000327430" description="Beclin-1-like protein B">
    <location>
        <begin position="1"/>
        <end position="855"/>
    </location>
</feature>
<feature type="region of interest" description="Disordered" evidence="3">
    <location>
        <begin position="92"/>
        <end position="212"/>
    </location>
</feature>
<feature type="region of interest" description="Disordered" evidence="3">
    <location>
        <begin position="236"/>
        <end position="271"/>
    </location>
</feature>
<feature type="region of interest" description="Disordered" evidence="3">
    <location>
        <begin position="294"/>
        <end position="380"/>
    </location>
</feature>
<feature type="region of interest" description="Disordered" evidence="3">
    <location>
        <begin position="407"/>
        <end position="475"/>
    </location>
</feature>
<feature type="region of interest" description="Disordered" evidence="3">
    <location>
        <begin position="826"/>
        <end position="855"/>
    </location>
</feature>
<feature type="coiled-coil region" evidence="2">
    <location>
        <begin position="538"/>
        <end position="595"/>
    </location>
</feature>
<feature type="compositionally biased region" description="Low complexity" evidence="3">
    <location>
        <begin position="99"/>
        <end position="123"/>
    </location>
</feature>
<feature type="compositionally biased region" description="Low complexity" evidence="3">
    <location>
        <begin position="131"/>
        <end position="143"/>
    </location>
</feature>
<feature type="compositionally biased region" description="Polar residues" evidence="3">
    <location>
        <begin position="144"/>
        <end position="156"/>
    </location>
</feature>
<feature type="compositionally biased region" description="Low complexity" evidence="3">
    <location>
        <begin position="177"/>
        <end position="200"/>
    </location>
</feature>
<feature type="compositionally biased region" description="Low complexity" evidence="3">
    <location>
        <begin position="294"/>
        <end position="348"/>
    </location>
</feature>
<feature type="compositionally biased region" description="Polar residues" evidence="3">
    <location>
        <begin position="368"/>
        <end position="377"/>
    </location>
</feature>
<feature type="compositionally biased region" description="Polar residues" evidence="3">
    <location>
        <begin position="413"/>
        <end position="445"/>
    </location>
</feature>
<feature type="compositionally biased region" description="Low complexity" evidence="3">
    <location>
        <begin position="446"/>
        <end position="474"/>
    </location>
</feature>
<comment type="function">
    <text evidence="1 4">Involved in autophagy. May be required to recruit the atg8-phosphatidylinositol conjugate and the atg12-atg5 conjugate to the pre-autophagosomal structure (By similarity).</text>
</comment>
<comment type="subcellular location">
    <subcellularLocation>
        <location evidence="1">Endosome membrane</location>
        <topology evidence="1">Peripheral membrane protein</topology>
    </subcellularLocation>
</comment>
<comment type="similarity">
    <text evidence="5">Belongs to the beclin family.</text>
</comment>
<accession>Q54JI9</accession>
<reference key="1">
    <citation type="journal article" date="2005" name="Nature">
        <title>The genome of the social amoeba Dictyostelium discoideum.</title>
        <authorList>
            <person name="Eichinger L."/>
            <person name="Pachebat J.A."/>
            <person name="Gloeckner G."/>
            <person name="Rajandream M.A."/>
            <person name="Sucgang R."/>
            <person name="Berriman M."/>
            <person name="Song J."/>
            <person name="Olsen R."/>
            <person name="Szafranski K."/>
            <person name="Xu Q."/>
            <person name="Tunggal B."/>
            <person name="Kummerfeld S."/>
            <person name="Madera M."/>
            <person name="Konfortov B.A."/>
            <person name="Rivero F."/>
            <person name="Bankier A.T."/>
            <person name="Lehmann R."/>
            <person name="Hamlin N."/>
            <person name="Davies R."/>
            <person name="Gaudet P."/>
            <person name="Fey P."/>
            <person name="Pilcher K."/>
            <person name="Chen G."/>
            <person name="Saunders D."/>
            <person name="Sodergren E.J."/>
            <person name="Davis P."/>
            <person name="Kerhornou A."/>
            <person name="Nie X."/>
            <person name="Hall N."/>
            <person name="Anjard C."/>
            <person name="Hemphill L."/>
            <person name="Bason N."/>
            <person name="Farbrother P."/>
            <person name="Desany B."/>
            <person name="Just E."/>
            <person name="Morio T."/>
            <person name="Rost R."/>
            <person name="Churcher C.M."/>
            <person name="Cooper J."/>
            <person name="Haydock S."/>
            <person name="van Driessche N."/>
            <person name="Cronin A."/>
            <person name="Goodhead I."/>
            <person name="Muzny D.M."/>
            <person name="Mourier T."/>
            <person name="Pain A."/>
            <person name="Lu M."/>
            <person name="Harper D."/>
            <person name="Lindsay R."/>
            <person name="Hauser H."/>
            <person name="James K.D."/>
            <person name="Quiles M."/>
            <person name="Madan Babu M."/>
            <person name="Saito T."/>
            <person name="Buchrieser C."/>
            <person name="Wardroper A."/>
            <person name="Felder M."/>
            <person name="Thangavelu M."/>
            <person name="Johnson D."/>
            <person name="Knights A."/>
            <person name="Loulseged H."/>
            <person name="Mungall K.L."/>
            <person name="Oliver K."/>
            <person name="Price C."/>
            <person name="Quail M.A."/>
            <person name="Urushihara H."/>
            <person name="Hernandez J."/>
            <person name="Rabbinowitsch E."/>
            <person name="Steffen D."/>
            <person name="Sanders M."/>
            <person name="Ma J."/>
            <person name="Kohara Y."/>
            <person name="Sharp S."/>
            <person name="Simmonds M.N."/>
            <person name="Spiegler S."/>
            <person name="Tivey A."/>
            <person name="Sugano S."/>
            <person name="White B."/>
            <person name="Walker D."/>
            <person name="Woodward J.R."/>
            <person name="Winckler T."/>
            <person name="Tanaka Y."/>
            <person name="Shaulsky G."/>
            <person name="Schleicher M."/>
            <person name="Weinstock G.M."/>
            <person name="Rosenthal A."/>
            <person name="Cox E.C."/>
            <person name="Chisholm R.L."/>
            <person name="Gibbs R.A."/>
            <person name="Loomis W.F."/>
            <person name="Platzer M."/>
            <person name="Kay R.R."/>
            <person name="Williams J.G."/>
            <person name="Dear P.H."/>
            <person name="Noegel A.A."/>
            <person name="Barrell B.G."/>
            <person name="Kuspa A."/>
        </authorList>
    </citation>
    <scope>NUCLEOTIDE SEQUENCE [LARGE SCALE GENOMIC DNA]</scope>
    <source>
        <strain>AX4</strain>
    </source>
</reference>
<reference key="2">
    <citation type="journal article" date="2004" name="J. Biol. Chem.">
        <title>Dictyostelium macroautophagy mutants vary in the severity of their developmental defects.</title>
        <authorList>
            <person name="Otto G.P."/>
            <person name="Wu M.Y."/>
            <person name="Kazgan N."/>
            <person name="Anderson O.R."/>
            <person name="Kessin R.H."/>
        </authorList>
    </citation>
    <scope>FUNCTION</scope>
</reference>
<organism>
    <name type="scientific">Dictyostelium discoideum</name>
    <name type="common">Social amoeba</name>
    <dbReference type="NCBI Taxonomy" id="44689"/>
    <lineage>
        <taxon>Eukaryota</taxon>
        <taxon>Amoebozoa</taxon>
        <taxon>Evosea</taxon>
        <taxon>Eumycetozoa</taxon>
        <taxon>Dictyostelia</taxon>
        <taxon>Dictyosteliales</taxon>
        <taxon>Dictyosteliaceae</taxon>
        <taxon>Dictyostelium</taxon>
    </lineage>
</organism>
<proteinExistence type="inferred from homology"/>
<dbReference type="EMBL" id="AAFI02000107">
    <property type="protein sequence ID" value="EAL63436.1"/>
    <property type="molecule type" value="Genomic_DNA"/>
</dbReference>
<dbReference type="RefSeq" id="XP_636942.1">
    <property type="nucleotide sequence ID" value="XM_631850.1"/>
</dbReference>
<dbReference type="SMR" id="Q54JI9"/>
<dbReference type="FunCoup" id="Q54JI9">
    <property type="interactions" value="1"/>
</dbReference>
<dbReference type="STRING" id="44689.Q54JI9"/>
<dbReference type="PaxDb" id="44689-DDB0220127"/>
<dbReference type="EnsemblProtists" id="EAL63436">
    <property type="protein sequence ID" value="EAL63436"/>
    <property type="gene ID" value="DDB_G0288021"/>
</dbReference>
<dbReference type="GeneID" id="8626417"/>
<dbReference type="KEGG" id="ddi:DDB_G0288021"/>
<dbReference type="dictyBase" id="DDB_G0288021">
    <property type="gene designation" value="atg6B"/>
</dbReference>
<dbReference type="VEuPathDB" id="AmoebaDB:DDB_G0288021"/>
<dbReference type="eggNOG" id="KOG2751">
    <property type="taxonomic scope" value="Eukaryota"/>
</dbReference>
<dbReference type="HOGENOM" id="CLU_334177_0_0_1"/>
<dbReference type="InParanoid" id="Q54JI9"/>
<dbReference type="OMA" id="DAFHLWH"/>
<dbReference type="Reactome" id="R-DDI-1169408">
    <property type="pathway name" value="ISG15 antiviral mechanism"/>
</dbReference>
<dbReference type="Reactome" id="R-DDI-1632852">
    <property type="pathway name" value="Macroautophagy"/>
</dbReference>
<dbReference type="Reactome" id="R-DDI-5689880">
    <property type="pathway name" value="Ub-specific processing proteases"/>
</dbReference>
<dbReference type="PRO" id="PR:Q54JI9"/>
<dbReference type="Proteomes" id="UP000002195">
    <property type="component" value="Chromosome 5"/>
</dbReference>
<dbReference type="GO" id="GO:0010008">
    <property type="term" value="C:endosome membrane"/>
    <property type="evidence" value="ECO:0007669"/>
    <property type="project" value="UniProtKB-SubCell"/>
</dbReference>
<dbReference type="GO" id="GO:0000407">
    <property type="term" value="C:phagophore assembly site"/>
    <property type="evidence" value="ECO:0000318"/>
    <property type="project" value="GO_Central"/>
</dbReference>
<dbReference type="GO" id="GO:0034271">
    <property type="term" value="C:phosphatidylinositol 3-kinase complex, class III, type I"/>
    <property type="evidence" value="ECO:0000318"/>
    <property type="project" value="GO_Central"/>
</dbReference>
<dbReference type="GO" id="GO:0034272">
    <property type="term" value="C:phosphatidylinositol 3-kinase complex, class III, type II"/>
    <property type="evidence" value="ECO:0000318"/>
    <property type="project" value="GO_Central"/>
</dbReference>
<dbReference type="GO" id="GO:0043548">
    <property type="term" value="F:phosphatidylinositol 3-kinase binding"/>
    <property type="evidence" value="ECO:0000318"/>
    <property type="project" value="GO_Central"/>
</dbReference>
<dbReference type="GO" id="GO:0030674">
    <property type="term" value="F:protein-macromolecule adaptor activity"/>
    <property type="evidence" value="ECO:0000318"/>
    <property type="project" value="GO_Central"/>
</dbReference>
<dbReference type="GO" id="GO:0000045">
    <property type="term" value="P:autophagosome assembly"/>
    <property type="evidence" value="ECO:0000318"/>
    <property type="project" value="GO_Central"/>
</dbReference>
<dbReference type="GO" id="GO:0006995">
    <property type="term" value="P:cellular response to nitrogen starvation"/>
    <property type="evidence" value="ECO:0000318"/>
    <property type="project" value="GO_Central"/>
</dbReference>
<dbReference type="GO" id="GO:0045324">
    <property type="term" value="P:late endosome to vacuole transport"/>
    <property type="evidence" value="ECO:0000318"/>
    <property type="project" value="GO_Central"/>
</dbReference>
<dbReference type="GO" id="GO:0000423">
    <property type="term" value="P:mitophagy"/>
    <property type="evidence" value="ECO:0000318"/>
    <property type="project" value="GO_Central"/>
</dbReference>
<dbReference type="GO" id="GO:0015031">
    <property type="term" value="P:protein transport"/>
    <property type="evidence" value="ECO:0007669"/>
    <property type="project" value="UniProtKB-KW"/>
</dbReference>
<dbReference type="FunFam" id="1.10.418.40:FF:000002">
    <property type="entry name" value="Beclin 1 protein"/>
    <property type="match status" value="1"/>
</dbReference>
<dbReference type="Gene3D" id="1.10.418.40">
    <property type="entry name" value="Autophagy protein 6/Beclin 1"/>
    <property type="match status" value="1"/>
</dbReference>
<dbReference type="InterPro" id="IPR007243">
    <property type="entry name" value="Atg6/Beclin"/>
</dbReference>
<dbReference type="InterPro" id="IPR038274">
    <property type="entry name" value="Atg6/Beclin_C_sf"/>
</dbReference>
<dbReference type="InterPro" id="IPR041691">
    <property type="entry name" value="Atg6/beclin_CC"/>
</dbReference>
<dbReference type="InterPro" id="IPR040455">
    <property type="entry name" value="Atg6_BARA"/>
</dbReference>
<dbReference type="PANTHER" id="PTHR12768">
    <property type="entry name" value="BECLIN 1"/>
    <property type="match status" value="1"/>
</dbReference>
<dbReference type="PANTHER" id="PTHR12768:SF4">
    <property type="entry name" value="BECLIN-1"/>
    <property type="match status" value="1"/>
</dbReference>
<dbReference type="Pfam" id="PF04111">
    <property type="entry name" value="APG6"/>
    <property type="match status" value="1"/>
</dbReference>
<dbReference type="Pfam" id="PF17675">
    <property type="entry name" value="APG6_N"/>
    <property type="match status" value="1"/>
</dbReference>
<name>BECNB_DICDI</name>
<gene>
    <name type="primary">atg6B</name>
    <name type="synonym">apg6B</name>
    <name type="ORF">DDB_G0288021</name>
</gene>
<evidence type="ECO:0000250" key="1"/>
<evidence type="ECO:0000255" key="2"/>
<evidence type="ECO:0000256" key="3">
    <source>
        <dbReference type="SAM" id="MobiDB-lite"/>
    </source>
</evidence>
<evidence type="ECO:0000269" key="4">
    <source>
    </source>
</evidence>
<evidence type="ECO:0000305" key="5"/>
<sequence>MDLYCQKCYKQLELDDSLLDIDQSLFLKTNIHEIIEELEELSLKPVPKERETLILKQQQQQLLQQQEQAAAAAAIQSPQTVSKMSKLKSGLFGKRKELTQSNSTTPTTPATPTATPTSSSLSLPTPPPLPQQQQQQQQQQQQTFNDQSKLTATTPTQPTPIEEKKQQSFKTFYPAAHSNNSSNGSDHGGNVNTTGVSPSSPGGGAHSFGSLSQHRLSSSLSLKSISSGGGNSSSNLVADINNNNNSVNKDNNTTISSSTVTTSNSISESNNQDSKLLVATTTTTTTTTTTTILATIPTTTTTSTPTTPSTVGGTTPSPPSSSSSSSSSSSVITSPISRISPSNITSPSKLSQQSTPRQRPLTIAPTKLNISQVSSPQKPRLKYLRTSSKSLSMASLPAVGPDGTIIVDGGASSGTESTSMTNHHSSFLNQSTLPLGSSPVQTTPPLLSNSMNNSTNNLQSLQQQQQQQQQQQQQPISENNYYKYMKGLSLFKIATDLINYDLPLCLECTKLTIGELEDEGSILDGEVSIYSAYLKQLEKGKTEEDLEELGKEMTLLCEEEEQLRLMIENTHQERKEVEQLTLQLQDRIATLKSLEDSYWSCFSEFHYETFRNKDERDQTTVQIQWVNDHLESLKQTNILNDAFHLWHDGHFGTINSLRLGKLPSQPVEWNEINAAWGLAVSLLDAMAKKLKFKFQQFTLVPNGSCSRVDKRDVDPPLAYELYGTNDISLGRLFWYRRFDNGMIAFLQCIKELCEHITEKDPEFSVPYKIDKEYIGGMCIKLQFTNDDTWTKSLKFMLTNLKWILIWIVKNETLTLFNNQQFQQSKLNNNQNNNNINNNNNNNINNNNNNNVNKRN</sequence>